<protein>
    <recommendedName>
        <fullName evidence="1">Transcription elongation factor GreA</fullName>
    </recommendedName>
    <alternativeName>
        <fullName evidence="1">Transcript cleavage factor GreA</fullName>
    </alternativeName>
</protein>
<comment type="function">
    <text evidence="1">Necessary for efficient RNA polymerase transcription elongation past template-encoded arresting sites. The arresting sites in DNA have the property of trapping a certain fraction of elongating RNA polymerases that pass through, resulting in locked ternary complexes. Cleavage of the nascent transcript by cleavage factors such as GreA or GreB allows the resumption of elongation from the new 3'terminus. GreA releases sequences of 2 to 3 nucleotides.</text>
</comment>
<comment type="similarity">
    <text evidence="1">Belongs to the GreA/GreB family.</text>
</comment>
<name>GREA_CHLAD</name>
<feature type="chain" id="PRO_1000118954" description="Transcription elongation factor GreA">
    <location>
        <begin position="1"/>
        <end position="157"/>
    </location>
</feature>
<feature type="coiled-coil region" evidence="1">
    <location>
        <begin position="47"/>
        <end position="75"/>
    </location>
</feature>
<evidence type="ECO:0000255" key="1">
    <source>
        <dbReference type="HAMAP-Rule" id="MF_00105"/>
    </source>
</evidence>
<reference key="1">
    <citation type="submission" date="2008-12" db="EMBL/GenBank/DDBJ databases">
        <title>Complete sequence of Chloroflexus aggregans DSM 9485.</title>
        <authorList>
            <consortium name="US DOE Joint Genome Institute"/>
            <person name="Lucas S."/>
            <person name="Copeland A."/>
            <person name="Lapidus A."/>
            <person name="Glavina del Rio T."/>
            <person name="Dalin E."/>
            <person name="Tice H."/>
            <person name="Pitluck S."/>
            <person name="Foster B."/>
            <person name="Larimer F."/>
            <person name="Land M."/>
            <person name="Hauser L."/>
            <person name="Kyrpides N."/>
            <person name="Mikhailova N."/>
            <person name="Bryant D.A."/>
            <person name="Richardson P."/>
        </authorList>
    </citation>
    <scope>NUCLEOTIDE SEQUENCE [LARGE SCALE GENOMIC DNA]</scope>
    <source>
        <strain>MD-66 / DSM 9485</strain>
    </source>
</reference>
<organism>
    <name type="scientific">Chloroflexus aggregans (strain MD-66 / DSM 9485)</name>
    <dbReference type="NCBI Taxonomy" id="326427"/>
    <lineage>
        <taxon>Bacteria</taxon>
        <taxon>Bacillati</taxon>
        <taxon>Chloroflexota</taxon>
        <taxon>Chloroflexia</taxon>
        <taxon>Chloroflexales</taxon>
        <taxon>Chloroflexineae</taxon>
        <taxon>Chloroflexaceae</taxon>
        <taxon>Chloroflexus</taxon>
    </lineage>
</organism>
<proteinExistence type="inferred from homology"/>
<sequence length="157" mass="17394">MTEKPTYLTREGRARLEAELEHLMTVERKQIAERIAAAKELGDISESGEYEDAKKAQALLEGRIRELKHLLSRAEIIDEDQASTGEVRIGSSVTVRFEDDGSEETWTIVGSAEANPRQGRISNESPIGAALLGKRVRNKVTVHTPSGVMKLTILKVR</sequence>
<accession>B8G358</accession>
<dbReference type="EMBL" id="CP001337">
    <property type="protein sequence ID" value="ACL25231.1"/>
    <property type="molecule type" value="Genomic_DNA"/>
</dbReference>
<dbReference type="RefSeq" id="WP_015941089.1">
    <property type="nucleotide sequence ID" value="NC_011831.1"/>
</dbReference>
<dbReference type="SMR" id="B8G358"/>
<dbReference type="STRING" id="326427.Cagg_2353"/>
<dbReference type="KEGG" id="cag:Cagg_2353"/>
<dbReference type="eggNOG" id="COG0782">
    <property type="taxonomic scope" value="Bacteria"/>
</dbReference>
<dbReference type="HOGENOM" id="CLU_101379_2_1_0"/>
<dbReference type="OrthoDB" id="9808774at2"/>
<dbReference type="Proteomes" id="UP000002508">
    <property type="component" value="Chromosome"/>
</dbReference>
<dbReference type="GO" id="GO:0003677">
    <property type="term" value="F:DNA binding"/>
    <property type="evidence" value="ECO:0007669"/>
    <property type="project" value="UniProtKB-UniRule"/>
</dbReference>
<dbReference type="GO" id="GO:0070063">
    <property type="term" value="F:RNA polymerase binding"/>
    <property type="evidence" value="ECO:0007669"/>
    <property type="project" value="InterPro"/>
</dbReference>
<dbReference type="GO" id="GO:0006354">
    <property type="term" value="P:DNA-templated transcription elongation"/>
    <property type="evidence" value="ECO:0007669"/>
    <property type="project" value="TreeGrafter"/>
</dbReference>
<dbReference type="GO" id="GO:0032784">
    <property type="term" value="P:regulation of DNA-templated transcription elongation"/>
    <property type="evidence" value="ECO:0007669"/>
    <property type="project" value="UniProtKB-UniRule"/>
</dbReference>
<dbReference type="FunFam" id="1.10.287.180:FF:000001">
    <property type="entry name" value="Transcription elongation factor GreA"/>
    <property type="match status" value="1"/>
</dbReference>
<dbReference type="FunFam" id="3.10.50.30:FF:000001">
    <property type="entry name" value="Transcription elongation factor GreA"/>
    <property type="match status" value="1"/>
</dbReference>
<dbReference type="Gene3D" id="3.10.50.30">
    <property type="entry name" value="Transcription elongation factor, GreA/GreB, C-terminal domain"/>
    <property type="match status" value="1"/>
</dbReference>
<dbReference type="Gene3D" id="1.10.287.180">
    <property type="entry name" value="Transcription elongation factor, GreA/GreB, N-terminal domain"/>
    <property type="match status" value="1"/>
</dbReference>
<dbReference type="HAMAP" id="MF_00105">
    <property type="entry name" value="GreA_GreB"/>
    <property type="match status" value="1"/>
</dbReference>
<dbReference type="InterPro" id="IPR036953">
    <property type="entry name" value="GreA/GreB_C_sf"/>
</dbReference>
<dbReference type="InterPro" id="IPR006359">
    <property type="entry name" value="Tscrpt_elong_fac_GreA"/>
</dbReference>
<dbReference type="InterPro" id="IPR028624">
    <property type="entry name" value="Tscrpt_elong_fac_GreA/B"/>
</dbReference>
<dbReference type="InterPro" id="IPR001437">
    <property type="entry name" value="Tscrpt_elong_fac_GreA/B_C"/>
</dbReference>
<dbReference type="InterPro" id="IPR023459">
    <property type="entry name" value="Tscrpt_elong_fac_GreA/B_fam"/>
</dbReference>
<dbReference type="InterPro" id="IPR022691">
    <property type="entry name" value="Tscrpt_elong_fac_GreA/B_N"/>
</dbReference>
<dbReference type="InterPro" id="IPR036805">
    <property type="entry name" value="Tscrpt_elong_fac_GreA/B_N_sf"/>
</dbReference>
<dbReference type="NCBIfam" id="TIGR01462">
    <property type="entry name" value="greA"/>
    <property type="match status" value="1"/>
</dbReference>
<dbReference type="NCBIfam" id="NF001263">
    <property type="entry name" value="PRK00226.1-4"/>
    <property type="match status" value="1"/>
</dbReference>
<dbReference type="PANTHER" id="PTHR30437">
    <property type="entry name" value="TRANSCRIPTION ELONGATION FACTOR GREA"/>
    <property type="match status" value="1"/>
</dbReference>
<dbReference type="PANTHER" id="PTHR30437:SF4">
    <property type="entry name" value="TRANSCRIPTION ELONGATION FACTOR GREA"/>
    <property type="match status" value="1"/>
</dbReference>
<dbReference type="Pfam" id="PF01272">
    <property type="entry name" value="GreA_GreB"/>
    <property type="match status" value="1"/>
</dbReference>
<dbReference type="Pfam" id="PF03449">
    <property type="entry name" value="GreA_GreB_N"/>
    <property type="match status" value="1"/>
</dbReference>
<dbReference type="PIRSF" id="PIRSF006092">
    <property type="entry name" value="GreA_GreB"/>
    <property type="match status" value="1"/>
</dbReference>
<dbReference type="SUPFAM" id="SSF54534">
    <property type="entry name" value="FKBP-like"/>
    <property type="match status" value="1"/>
</dbReference>
<dbReference type="SUPFAM" id="SSF46557">
    <property type="entry name" value="GreA transcript cleavage protein, N-terminal domain"/>
    <property type="match status" value="1"/>
</dbReference>
<gene>
    <name evidence="1" type="primary">greA</name>
    <name type="ordered locus">Cagg_2353</name>
</gene>
<keyword id="KW-0175">Coiled coil</keyword>
<keyword id="KW-0238">DNA-binding</keyword>
<keyword id="KW-0804">Transcription</keyword>
<keyword id="KW-0805">Transcription regulation</keyword>